<organism>
    <name type="scientific">Mus musculus</name>
    <name type="common">Mouse</name>
    <dbReference type="NCBI Taxonomy" id="10090"/>
    <lineage>
        <taxon>Eukaryota</taxon>
        <taxon>Metazoa</taxon>
        <taxon>Chordata</taxon>
        <taxon>Craniata</taxon>
        <taxon>Vertebrata</taxon>
        <taxon>Euteleostomi</taxon>
        <taxon>Mammalia</taxon>
        <taxon>Eutheria</taxon>
        <taxon>Euarchontoglires</taxon>
        <taxon>Glires</taxon>
        <taxon>Rodentia</taxon>
        <taxon>Myomorpha</taxon>
        <taxon>Muroidea</taxon>
        <taxon>Muridae</taxon>
        <taxon>Murinae</taxon>
        <taxon>Mus</taxon>
        <taxon>Mus</taxon>
    </lineage>
</organism>
<sequence length="170" mass="19203">MAQMVAGDQDAGTLWVPSQSESQTESDISTQSLRKPTMSYVILKTLADKRVHNCVSLATLKKAVSITGYNMTHNTWRFKRVLQNLLDKGMIMHVTCCKGASGSLCLCKERALKSNHRAKRCQDRQKSQKPQKPGQRESEPCQLLLSSKKKNDQLFKGVRRVAKGNRHCHY</sequence>
<dbReference type="EMBL" id="AY286319">
    <property type="protein sequence ID" value="AAQ23051.1"/>
    <property type="molecule type" value="mRNA"/>
</dbReference>
<dbReference type="EMBL" id="AB022320">
    <property type="protein sequence ID" value="BAA82785.1"/>
    <property type="molecule type" value="mRNA"/>
</dbReference>
<dbReference type="EMBL" id="AB045724">
    <property type="protein sequence ID" value="BAB97206.1"/>
    <property type="molecule type" value="mRNA"/>
</dbReference>
<dbReference type="EMBL" id="AK005718">
    <property type="protein sequence ID" value="BAB24203.1"/>
    <property type="molecule type" value="mRNA"/>
</dbReference>
<dbReference type="EMBL" id="BC061119">
    <property type="protein sequence ID" value="AAH61119.1"/>
    <property type="molecule type" value="mRNA"/>
</dbReference>
<dbReference type="CCDS" id="CCDS25267.1"/>
<dbReference type="RefSeq" id="NP_061262.1">
    <property type="nucleotide sequence ID" value="NM_018792.2"/>
</dbReference>
<dbReference type="SMR" id="Q9QYL0"/>
<dbReference type="FunCoup" id="Q9QYL0">
    <property type="interactions" value="142"/>
</dbReference>
<dbReference type="STRING" id="10090.ENSMUSP00000039866"/>
<dbReference type="iPTMnet" id="Q9QYL0"/>
<dbReference type="PhosphoSitePlus" id="Q9QYL0"/>
<dbReference type="PaxDb" id="10090-ENSMUSP00000039866"/>
<dbReference type="ProteomicsDB" id="273343"/>
<dbReference type="DNASU" id="54388"/>
<dbReference type="Ensembl" id="ENSMUST00000038928.7">
    <property type="protein sequence ID" value="ENSMUSP00000039866.6"/>
    <property type="gene ID" value="ENSMUSG00000038994.7"/>
</dbReference>
<dbReference type="GeneID" id="54388"/>
<dbReference type="KEGG" id="mmu:54388"/>
<dbReference type="UCSC" id="uc007kzq.1">
    <property type="organism name" value="mouse"/>
</dbReference>
<dbReference type="AGR" id="MGI:2136691"/>
<dbReference type="CTD" id="54388"/>
<dbReference type="MGI" id="MGI:2136691">
    <property type="gene designation" value="H1f9"/>
</dbReference>
<dbReference type="VEuPathDB" id="HostDB:ENSMUSG00000038994"/>
<dbReference type="eggNOG" id="ENOG502SVZZ">
    <property type="taxonomic scope" value="Eukaryota"/>
</dbReference>
<dbReference type="GeneTree" id="ENSGT00730000111487"/>
<dbReference type="HOGENOM" id="CLU_105276_0_0_1"/>
<dbReference type="InParanoid" id="Q9QYL0"/>
<dbReference type="OMA" id="NMTRNAW"/>
<dbReference type="OrthoDB" id="10070184at2759"/>
<dbReference type="PhylomeDB" id="Q9QYL0"/>
<dbReference type="TreeFam" id="TF337069"/>
<dbReference type="BioGRID-ORCS" id="54388">
    <property type="hits" value="2 hits in 76 CRISPR screens"/>
</dbReference>
<dbReference type="PRO" id="PR:Q9QYL0"/>
<dbReference type="Proteomes" id="UP000000589">
    <property type="component" value="Chromosome 11"/>
</dbReference>
<dbReference type="RNAct" id="Q9QYL0">
    <property type="molecule type" value="protein"/>
</dbReference>
<dbReference type="Bgee" id="ENSMUSG00000038994">
    <property type="expression patterns" value="Expressed in seminiferous tubule of testis and 30 other cell types or tissues"/>
</dbReference>
<dbReference type="ExpressionAtlas" id="Q9QYL0">
    <property type="expression patterns" value="baseline and differential"/>
</dbReference>
<dbReference type="GO" id="GO:0000786">
    <property type="term" value="C:nucleosome"/>
    <property type="evidence" value="ECO:0007669"/>
    <property type="project" value="InterPro"/>
</dbReference>
<dbReference type="GO" id="GO:0005634">
    <property type="term" value="C:nucleus"/>
    <property type="evidence" value="ECO:0007669"/>
    <property type="project" value="UniProtKB-SubCell"/>
</dbReference>
<dbReference type="GO" id="GO:0003677">
    <property type="term" value="F:DNA binding"/>
    <property type="evidence" value="ECO:0007669"/>
    <property type="project" value="UniProtKB-KW"/>
</dbReference>
<dbReference type="GO" id="GO:0030154">
    <property type="term" value="P:cell differentiation"/>
    <property type="evidence" value="ECO:0007669"/>
    <property type="project" value="UniProtKB-KW"/>
</dbReference>
<dbReference type="GO" id="GO:0030261">
    <property type="term" value="P:chromosome condensation"/>
    <property type="evidence" value="ECO:0000304"/>
    <property type="project" value="MGI"/>
</dbReference>
<dbReference type="GO" id="GO:0006334">
    <property type="term" value="P:nucleosome assembly"/>
    <property type="evidence" value="ECO:0007669"/>
    <property type="project" value="InterPro"/>
</dbReference>
<dbReference type="GO" id="GO:0007283">
    <property type="term" value="P:spermatogenesis"/>
    <property type="evidence" value="ECO:0000304"/>
    <property type="project" value="MGI"/>
</dbReference>
<dbReference type="FunFam" id="1.10.10.10:FF:000724">
    <property type="entry name" value="Histone H1-like protein in spermatids 1"/>
    <property type="match status" value="1"/>
</dbReference>
<dbReference type="Gene3D" id="1.10.10.10">
    <property type="entry name" value="Winged helix-like DNA-binding domain superfamily/Winged helix DNA-binding domain"/>
    <property type="match status" value="1"/>
</dbReference>
<dbReference type="InterPro" id="IPR005818">
    <property type="entry name" value="Histone_H1/H5_H15"/>
</dbReference>
<dbReference type="InterPro" id="IPR036388">
    <property type="entry name" value="WH-like_DNA-bd_sf"/>
</dbReference>
<dbReference type="InterPro" id="IPR036390">
    <property type="entry name" value="WH_DNA-bd_sf"/>
</dbReference>
<dbReference type="Pfam" id="PF00538">
    <property type="entry name" value="Linker_histone"/>
    <property type="match status" value="1"/>
</dbReference>
<dbReference type="SUPFAM" id="SSF46785">
    <property type="entry name" value="Winged helix' DNA-binding domain"/>
    <property type="match status" value="1"/>
</dbReference>
<reference key="1">
    <citation type="journal article" date="2003" name="Proc. Natl. Acad. Sci. U.S.A.">
        <title>HILS1 is a spermatid-specific linker histone H1-like protein implicated in chromatin remodeling during mammalian spermiogenesis.</title>
        <authorList>
            <person name="Yan W."/>
            <person name="Ma L."/>
            <person name="Burns K.H."/>
            <person name="Matzuk M.M."/>
        </authorList>
    </citation>
    <scope>NUCLEOTIDE SEQUENCE [MRNA]</scope>
    <scope>FUNCTION</scope>
    <scope>SUBCELLULAR LOCATION</scope>
    <scope>TISSUE SPECIFICITY</scope>
    <source>
        <strain>C57BL/6 X 129</strain>
        <tissue>Testis</tissue>
    </source>
</reference>
<reference key="2">
    <citation type="journal article" date="2003" name="Int. J. Androl.">
        <title>Isolation and characterization of a novel cDNA encoding a DNA-binding protein (Hils1) specifically expressed in testicular haploid germ cells.</title>
        <authorList>
            <person name="Iguchi N."/>
            <person name="Tanaka H."/>
            <person name="Yomogida K."/>
            <person name="Nishimune Y."/>
        </authorList>
    </citation>
    <scope>NUCLEOTIDE SEQUENCE [MRNA]</scope>
    <scope>FUNCTION</scope>
    <scope>DNA-BINDING</scope>
    <scope>TISSUE SPECIFICITY</scope>
    <scope>DEVELOPMENTAL STAGE</scope>
    <scope>SUBCELLULAR LOCATION</scope>
    <source>
        <strain>C57BL/6J</strain>
        <tissue>Testis</tissue>
    </source>
</reference>
<reference key="3">
    <citation type="journal article" date="2005" name="Science">
        <title>The transcriptional landscape of the mammalian genome.</title>
        <authorList>
            <person name="Carninci P."/>
            <person name="Kasukawa T."/>
            <person name="Katayama S."/>
            <person name="Gough J."/>
            <person name="Frith M.C."/>
            <person name="Maeda N."/>
            <person name="Oyama R."/>
            <person name="Ravasi T."/>
            <person name="Lenhard B."/>
            <person name="Wells C."/>
            <person name="Kodzius R."/>
            <person name="Shimokawa K."/>
            <person name="Bajic V.B."/>
            <person name="Brenner S.E."/>
            <person name="Batalov S."/>
            <person name="Forrest A.R."/>
            <person name="Zavolan M."/>
            <person name="Davis M.J."/>
            <person name="Wilming L.G."/>
            <person name="Aidinis V."/>
            <person name="Allen J.E."/>
            <person name="Ambesi-Impiombato A."/>
            <person name="Apweiler R."/>
            <person name="Aturaliya R.N."/>
            <person name="Bailey T.L."/>
            <person name="Bansal M."/>
            <person name="Baxter L."/>
            <person name="Beisel K.W."/>
            <person name="Bersano T."/>
            <person name="Bono H."/>
            <person name="Chalk A.M."/>
            <person name="Chiu K.P."/>
            <person name="Choudhary V."/>
            <person name="Christoffels A."/>
            <person name="Clutterbuck D.R."/>
            <person name="Crowe M.L."/>
            <person name="Dalla E."/>
            <person name="Dalrymple B.P."/>
            <person name="de Bono B."/>
            <person name="Della Gatta G."/>
            <person name="di Bernardo D."/>
            <person name="Down T."/>
            <person name="Engstrom P."/>
            <person name="Fagiolini M."/>
            <person name="Faulkner G."/>
            <person name="Fletcher C.F."/>
            <person name="Fukushima T."/>
            <person name="Furuno M."/>
            <person name="Futaki S."/>
            <person name="Gariboldi M."/>
            <person name="Georgii-Hemming P."/>
            <person name="Gingeras T.R."/>
            <person name="Gojobori T."/>
            <person name="Green R.E."/>
            <person name="Gustincich S."/>
            <person name="Harbers M."/>
            <person name="Hayashi Y."/>
            <person name="Hensch T.K."/>
            <person name="Hirokawa N."/>
            <person name="Hill D."/>
            <person name="Huminiecki L."/>
            <person name="Iacono M."/>
            <person name="Ikeo K."/>
            <person name="Iwama A."/>
            <person name="Ishikawa T."/>
            <person name="Jakt M."/>
            <person name="Kanapin A."/>
            <person name="Katoh M."/>
            <person name="Kawasawa Y."/>
            <person name="Kelso J."/>
            <person name="Kitamura H."/>
            <person name="Kitano H."/>
            <person name="Kollias G."/>
            <person name="Krishnan S.P."/>
            <person name="Kruger A."/>
            <person name="Kummerfeld S.K."/>
            <person name="Kurochkin I.V."/>
            <person name="Lareau L.F."/>
            <person name="Lazarevic D."/>
            <person name="Lipovich L."/>
            <person name="Liu J."/>
            <person name="Liuni S."/>
            <person name="McWilliam S."/>
            <person name="Madan Babu M."/>
            <person name="Madera M."/>
            <person name="Marchionni L."/>
            <person name="Matsuda H."/>
            <person name="Matsuzawa S."/>
            <person name="Miki H."/>
            <person name="Mignone F."/>
            <person name="Miyake S."/>
            <person name="Morris K."/>
            <person name="Mottagui-Tabar S."/>
            <person name="Mulder N."/>
            <person name="Nakano N."/>
            <person name="Nakauchi H."/>
            <person name="Ng P."/>
            <person name="Nilsson R."/>
            <person name="Nishiguchi S."/>
            <person name="Nishikawa S."/>
            <person name="Nori F."/>
            <person name="Ohara O."/>
            <person name="Okazaki Y."/>
            <person name="Orlando V."/>
            <person name="Pang K.C."/>
            <person name="Pavan W.J."/>
            <person name="Pavesi G."/>
            <person name="Pesole G."/>
            <person name="Petrovsky N."/>
            <person name="Piazza S."/>
            <person name="Reed J."/>
            <person name="Reid J.F."/>
            <person name="Ring B.Z."/>
            <person name="Ringwald M."/>
            <person name="Rost B."/>
            <person name="Ruan Y."/>
            <person name="Salzberg S.L."/>
            <person name="Sandelin A."/>
            <person name="Schneider C."/>
            <person name="Schoenbach C."/>
            <person name="Sekiguchi K."/>
            <person name="Semple C.A."/>
            <person name="Seno S."/>
            <person name="Sessa L."/>
            <person name="Sheng Y."/>
            <person name="Shibata Y."/>
            <person name="Shimada H."/>
            <person name="Shimada K."/>
            <person name="Silva D."/>
            <person name="Sinclair B."/>
            <person name="Sperling S."/>
            <person name="Stupka E."/>
            <person name="Sugiura K."/>
            <person name="Sultana R."/>
            <person name="Takenaka Y."/>
            <person name="Taki K."/>
            <person name="Tammoja K."/>
            <person name="Tan S.L."/>
            <person name="Tang S."/>
            <person name="Taylor M.S."/>
            <person name="Tegner J."/>
            <person name="Teichmann S.A."/>
            <person name="Ueda H.R."/>
            <person name="van Nimwegen E."/>
            <person name="Verardo R."/>
            <person name="Wei C.L."/>
            <person name="Yagi K."/>
            <person name="Yamanishi H."/>
            <person name="Zabarovsky E."/>
            <person name="Zhu S."/>
            <person name="Zimmer A."/>
            <person name="Hide W."/>
            <person name="Bult C."/>
            <person name="Grimmond S.M."/>
            <person name="Teasdale R.D."/>
            <person name="Liu E.T."/>
            <person name="Brusic V."/>
            <person name="Quackenbush J."/>
            <person name="Wahlestedt C."/>
            <person name="Mattick J.S."/>
            <person name="Hume D.A."/>
            <person name="Kai C."/>
            <person name="Sasaki D."/>
            <person name="Tomaru Y."/>
            <person name="Fukuda S."/>
            <person name="Kanamori-Katayama M."/>
            <person name="Suzuki M."/>
            <person name="Aoki J."/>
            <person name="Arakawa T."/>
            <person name="Iida J."/>
            <person name="Imamura K."/>
            <person name="Itoh M."/>
            <person name="Kato T."/>
            <person name="Kawaji H."/>
            <person name="Kawagashira N."/>
            <person name="Kawashima T."/>
            <person name="Kojima M."/>
            <person name="Kondo S."/>
            <person name="Konno H."/>
            <person name="Nakano K."/>
            <person name="Ninomiya N."/>
            <person name="Nishio T."/>
            <person name="Okada M."/>
            <person name="Plessy C."/>
            <person name="Shibata K."/>
            <person name="Shiraki T."/>
            <person name="Suzuki S."/>
            <person name="Tagami M."/>
            <person name="Waki K."/>
            <person name="Watahiki A."/>
            <person name="Okamura-Oho Y."/>
            <person name="Suzuki H."/>
            <person name="Kawai J."/>
            <person name="Hayashizaki Y."/>
        </authorList>
    </citation>
    <scope>NUCLEOTIDE SEQUENCE [LARGE SCALE MRNA]</scope>
    <source>
        <strain>C57BL/6J</strain>
        <tissue>Testis</tissue>
    </source>
</reference>
<reference key="4">
    <citation type="journal article" date="2004" name="Genome Res.">
        <title>The status, quality, and expansion of the NIH full-length cDNA project: the Mammalian Gene Collection (MGC).</title>
        <authorList>
            <consortium name="The MGC Project Team"/>
        </authorList>
    </citation>
    <scope>NUCLEOTIDE SEQUENCE [LARGE SCALE MRNA]</scope>
    <source>
        <tissue>Testis</tissue>
    </source>
</reference>
<reference key="5">
    <citation type="journal article" date="2010" name="Cell">
        <title>A tissue-specific atlas of mouse protein phosphorylation and expression.</title>
        <authorList>
            <person name="Huttlin E.L."/>
            <person name="Jedrychowski M.P."/>
            <person name="Elias J.E."/>
            <person name="Goswami T."/>
            <person name="Rad R."/>
            <person name="Beausoleil S.A."/>
            <person name="Villen J."/>
            <person name="Haas W."/>
            <person name="Sowa M.E."/>
            <person name="Gygi S.P."/>
        </authorList>
    </citation>
    <scope>IDENTIFICATION BY MASS SPECTROMETRY [LARGE SCALE ANALYSIS]</scope>
    <source>
        <tissue>Testis</tissue>
    </source>
</reference>
<comment type="function">
    <text evidence="4 5">DNA-binding protein that may be implicated in chromatin remodeling and/or transcriptional regulation during spermiogenesis, the process of spermatid maturation into spermatozoa.</text>
</comment>
<comment type="subcellular location">
    <subcellularLocation>
        <location evidence="4 5">Nucleus</location>
    </subcellularLocation>
    <subcellularLocation>
        <location evidence="4 5">Chromosome</location>
    </subcellularLocation>
</comment>
<comment type="tissue specificity">
    <text evidence="4 5">Expressed exclusively in the testis by haploid germ cells (at protein level).</text>
</comment>
<comment type="developmental stage">
    <text evidence="5">Expression initiated at step 9 of spermatid development and peaked between steps 10-13. Expression decreased abruptly at step 14 and was undetectable after step 15.</text>
</comment>
<comment type="similarity">
    <text evidence="6">Belongs to the histone H1/H5 family.</text>
</comment>
<protein>
    <recommendedName>
        <fullName evidence="6">Histone H1.9</fullName>
    </recommendedName>
    <alternativeName>
        <fullName evidence="7">H1.9 linker histone</fullName>
    </alternativeName>
    <alternativeName>
        <fullName evidence="6">Spermatid-specific linker histone H1-like protein</fullName>
    </alternativeName>
    <alternativeName>
        <fullName evidence="7">TISP64</fullName>
    </alternativeName>
</protein>
<name>HILS1_MOUSE</name>
<accession>Q9QYL0</accession>
<keyword id="KW-0156">Chromatin regulator</keyword>
<keyword id="KW-0158">Chromosome</keyword>
<keyword id="KW-0217">Developmental protein</keyword>
<keyword id="KW-0221">Differentiation</keyword>
<keyword id="KW-0238">DNA-binding</keyword>
<keyword id="KW-0539">Nucleus</keyword>
<keyword id="KW-0597">Phosphoprotein</keyword>
<keyword id="KW-1185">Reference proteome</keyword>
<keyword id="KW-0744">Spermatogenesis</keyword>
<keyword id="KW-0804">Transcription</keyword>
<keyword id="KW-0805">Transcription regulation</keyword>
<gene>
    <name evidence="6" type="primary">H1-9</name>
    <name evidence="2" type="synonym">H1-9p</name>
    <name evidence="7" type="synonym">H1f9</name>
    <name evidence="7" type="synonym">Hils1</name>
</gene>
<proteinExistence type="evidence at protein level"/>
<feature type="chain" id="PRO_0000196015" description="Histone H1.9">
    <location>
        <begin position="1"/>
        <end position="170"/>
    </location>
</feature>
<feature type="domain" description="H15">
    <location>
        <begin position="34"/>
        <end position="108"/>
    </location>
</feature>
<feature type="region of interest" description="Disordered" evidence="3">
    <location>
        <begin position="118"/>
        <end position="140"/>
    </location>
</feature>
<feature type="modified residue" description="Phosphoserine" evidence="1">
    <location>
        <position position="56"/>
    </location>
</feature>
<evidence type="ECO:0000250" key="1">
    <source>
        <dbReference type="UniProtKB" id="D3ZZW6"/>
    </source>
</evidence>
<evidence type="ECO:0000250" key="2">
    <source>
        <dbReference type="UniProtKB" id="P60008"/>
    </source>
</evidence>
<evidence type="ECO:0000256" key="3">
    <source>
        <dbReference type="SAM" id="MobiDB-lite"/>
    </source>
</evidence>
<evidence type="ECO:0000269" key="4">
    <source>
    </source>
</evidence>
<evidence type="ECO:0000269" key="5">
    <source>
    </source>
</evidence>
<evidence type="ECO:0000305" key="6"/>
<evidence type="ECO:0000312" key="7">
    <source>
        <dbReference type="MGI" id="MGI:2136691"/>
    </source>
</evidence>